<evidence type="ECO:0000250" key="1">
    <source>
        <dbReference type="UniProtKB" id="Q9C5U0"/>
    </source>
</evidence>
<evidence type="ECO:0000255" key="2"/>
<evidence type="ECO:0000255" key="3">
    <source>
        <dbReference type="PROSITE-ProRule" id="PRU00049"/>
    </source>
</evidence>
<evidence type="ECO:0000255" key="4">
    <source>
        <dbReference type="PROSITE-ProRule" id="PRU00107"/>
    </source>
</evidence>
<evidence type="ECO:0000255" key="5">
    <source>
        <dbReference type="PROSITE-ProRule" id="PRU00169"/>
    </source>
</evidence>
<evidence type="ECO:0000255" key="6">
    <source>
        <dbReference type="PROSITE-ProRule" id="PRU00498"/>
    </source>
</evidence>
<evidence type="ECO:0000269" key="7">
    <source>
    </source>
</evidence>
<evidence type="ECO:0000303" key="8">
    <source>
    </source>
</evidence>
<evidence type="ECO:0000312" key="9">
    <source>
        <dbReference type="EMBL" id="AET05490.2"/>
    </source>
</evidence>
<evidence type="ECO:0000312" key="10">
    <source>
        <dbReference type="EMBL" id="RHN43850.1"/>
    </source>
</evidence>
<evidence type="ECO:0007744" key="11">
    <source>
        <dbReference type="PDB" id="7P8E"/>
    </source>
</evidence>
<sequence>MGLLLKMKMQNQHHPLASKLQEQTGNKRYTFIQAHRAWLLKLMFLWILLMALISRIIYSKMDVGTKVRRKEVLGSLCDQRARMLQDQFSVSVNHVHALAILVSTFHYYRNPSAIDQETFAEYTARTAFERPLLSGVAYAQRVVNSEREQFEKQHGVVIKTMEREASPVRDEYAPVIFAQETVSYLESIDMMSGEEDRENIMRARATGKAVLTSPFRLLGSHHLGVVLTFPVYKSKLPPNPTTEELIKATAGYVGGSFDVESLVENLLGQLAGHQAILVNVYDVTNSSDPLIMYGNQYEEGDVSLVHESKLDFGDPYRKHQMICRYHQKAPPNWTALSTAILFFVILLLIGYILYGAGNHIVKVEDDFHEMQELKVRAEAADVAKSQFLATVSHEIRTPMNGILGMLGLLLRTELNSTQRDYAQTAQACGKALIALINEVLDRAKIEAGKLELEAVPFDLRSILDDVLSLFSEKSRHKGLELAVFVSDKVPDIVMGDPGRFRQIVTNLVGNSVKFTERGHIFVKVHLSENRKPVTNGKHETYRNGGSEEVVHASGGYNLKTLSGYEAADERNNWDNFNHLIADEEFFCDASTKKVASNEFYEQVTLMVCVEDTGIGIPFSAQDRIFMPFVQADSSTSRNYGGTGIGLSISKCLVELMGGQINFISRPQVGSTFSFTADFGIFKKNPITEVKKVNYEDLPSSFRGLKAVVVDGKPVRAAVTRYHLKRLGIQVKVANAINKAVSLCGKNGASSTGLFQPDIIFVEKDSWVCGEDGIFSVRQLDWKQNGHIFKMPQMILLATNISNDEFDKAKSAGFSDTVIMKPLRASMVGACLQQVLGTGKKRQLGKEMPNGSTSVRSLLFGKKILVVDDNVVNRRVAAGALKNFGADVKCADSGKAALEMLQFPHKFDACFMDIQMPEMDGFEATRRIREMERTANEETNSECGERKSEFHLPILAMTADVIHATYEECLKCGMDGYVSKPFEEENLYQAVAKFFQTKPTSVDS</sequence>
<proteinExistence type="evidence at protein level"/>
<feature type="chain" id="PRO_0000462091" description="Histidine kinase CRE1">
    <location>
        <begin position="1"/>
        <end position="1003"/>
    </location>
</feature>
<feature type="transmembrane region" description="Helical" evidence="2">
    <location>
        <begin position="37"/>
        <end position="57"/>
    </location>
</feature>
<feature type="transmembrane region" description="Helical" evidence="2">
    <location>
        <begin position="333"/>
        <end position="353"/>
    </location>
</feature>
<feature type="domain" description="CHASE" evidence="3">
    <location>
        <begin position="110"/>
        <end position="322"/>
    </location>
</feature>
<feature type="domain" description="Histidine kinase" evidence="4">
    <location>
        <begin position="390"/>
        <end position="680"/>
    </location>
</feature>
<feature type="domain" description="Response regulatory 1" evidence="5">
    <location>
        <begin position="705"/>
        <end position="835"/>
    </location>
</feature>
<feature type="domain" description="Response regulatory 2" evidence="5">
    <location>
        <begin position="862"/>
        <end position="994"/>
    </location>
</feature>
<feature type="binding site" evidence="1">
    <location>
        <position position="196"/>
    </location>
    <ligand>
        <name>trans-zeatin</name>
        <dbReference type="ChEBI" id="CHEBI:16522"/>
    </ligand>
</feature>
<feature type="binding site" evidence="1">
    <location>
        <position position="218"/>
    </location>
    <ligand>
        <name>trans-zeatin</name>
        <dbReference type="ChEBI" id="CHEBI:16522"/>
    </ligand>
</feature>
<feature type="binding site" evidence="1">
    <location>
        <position position="228"/>
    </location>
    <ligand>
        <name>trans-zeatin</name>
        <dbReference type="ChEBI" id="CHEBI:16522"/>
    </ligand>
</feature>
<feature type="binding site" evidence="7 11">
    <location>
        <position position="867"/>
    </location>
    <ligand>
        <name>Ca(2+)</name>
        <dbReference type="ChEBI" id="CHEBI:29108"/>
    </ligand>
</feature>
<feature type="binding site" evidence="7 11">
    <location>
        <position position="868"/>
    </location>
    <ligand>
        <name>Ca(2+)</name>
        <dbReference type="ChEBI" id="CHEBI:29108"/>
    </ligand>
</feature>
<feature type="binding site" evidence="7 11">
    <location>
        <position position="912"/>
    </location>
    <ligand>
        <name>Ca(2+)</name>
        <dbReference type="ChEBI" id="CHEBI:29108"/>
    </ligand>
</feature>
<feature type="binding site" evidence="7 11">
    <location>
        <position position="914"/>
    </location>
    <ligand>
        <name>Ca(2+)</name>
        <dbReference type="ChEBI" id="CHEBI:29108"/>
    </ligand>
</feature>
<feature type="binding site" evidence="7 11">
    <location>
        <position position="959"/>
    </location>
    <ligand>
        <name>Ca(2+)</name>
        <dbReference type="ChEBI" id="CHEBI:29108"/>
    </ligand>
</feature>
<feature type="modified residue" description="Phosphohistidine; by autocatalysis" evidence="1 4">
    <location>
        <position position="393"/>
    </location>
</feature>
<feature type="modified residue" description="4-aspartylphosphate" evidence="5">
    <location>
        <position position="912"/>
    </location>
</feature>
<feature type="glycosylation site" description="N-linked (GlcNAc...) asparagine" evidence="6">
    <location>
        <position position="285"/>
    </location>
</feature>
<feature type="glycosylation site" description="N-linked (GlcNAc...) asparagine" evidence="6">
    <location>
        <position position="332"/>
    </location>
</feature>
<feature type="glycosylation site" description="N-linked (GlcNAc...) asparagine" evidence="6">
    <location>
        <position position="415"/>
    </location>
</feature>
<feature type="glycosylation site" description="N-linked (GlcNAc...) asparagine" evidence="6">
    <location>
        <position position="799"/>
    </location>
</feature>
<feature type="glycosylation site" description="N-linked (GlcNAc...) asparagine" evidence="6">
    <location>
        <position position="849"/>
    </location>
</feature>
<dbReference type="EC" id="2.7.13.3" evidence="1"/>
<dbReference type="EMBL" id="CM001224">
    <property type="protein sequence ID" value="AET05490.2"/>
    <property type="molecule type" value="Genomic_DNA"/>
</dbReference>
<dbReference type="EMBL" id="PSQE01000008">
    <property type="protein sequence ID" value="RHN43850.1"/>
    <property type="molecule type" value="Genomic_DNA"/>
</dbReference>
<dbReference type="PDB" id="7P8E">
    <property type="method" value="X-ray"/>
    <property type="resolution" value="2.50 A"/>
    <property type="chains" value="A=351-994"/>
</dbReference>
<dbReference type="PDBsum" id="7P8E"/>
<dbReference type="SMR" id="G7LCC3"/>
<dbReference type="STRING" id="3880.G7LCC3"/>
<dbReference type="PaxDb" id="3880-AET05490"/>
<dbReference type="EnsemblPlants" id="rna50480">
    <property type="protein sequence ID" value="RHN43850.1"/>
    <property type="gene ID" value="gene50480"/>
</dbReference>
<dbReference type="Gramene" id="rna50480">
    <property type="protein sequence ID" value="RHN43850.1"/>
    <property type="gene ID" value="gene50480"/>
</dbReference>
<dbReference type="KEGG" id="mtr:11411168"/>
<dbReference type="eggNOG" id="KOG0519">
    <property type="taxonomic scope" value="Eukaryota"/>
</dbReference>
<dbReference type="HOGENOM" id="CLU_000445_16_2_1"/>
<dbReference type="OrthoDB" id="5476858at2759"/>
<dbReference type="Proteomes" id="UP000002051">
    <property type="component" value="Chromosome 8"/>
</dbReference>
<dbReference type="Proteomes" id="UP000265566">
    <property type="component" value="Chromosome 8"/>
</dbReference>
<dbReference type="ExpressionAtlas" id="G7LCC3">
    <property type="expression patterns" value="differential"/>
</dbReference>
<dbReference type="GO" id="GO:0005789">
    <property type="term" value="C:endoplasmic reticulum membrane"/>
    <property type="evidence" value="ECO:0007669"/>
    <property type="project" value="UniProtKB-SubCell"/>
</dbReference>
<dbReference type="GO" id="GO:0005634">
    <property type="term" value="C:nucleus"/>
    <property type="evidence" value="ECO:0000318"/>
    <property type="project" value="GO_Central"/>
</dbReference>
<dbReference type="GO" id="GO:0016787">
    <property type="term" value="F:hydrolase activity"/>
    <property type="evidence" value="ECO:0007669"/>
    <property type="project" value="UniProtKB-KW"/>
</dbReference>
<dbReference type="GO" id="GO:0046872">
    <property type="term" value="F:metal ion binding"/>
    <property type="evidence" value="ECO:0007669"/>
    <property type="project" value="UniProtKB-KW"/>
</dbReference>
<dbReference type="GO" id="GO:0000155">
    <property type="term" value="F:phosphorelay sensor kinase activity"/>
    <property type="evidence" value="ECO:0007669"/>
    <property type="project" value="InterPro"/>
</dbReference>
<dbReference type="GO" id="GO:0009736">
    <property type="term" value="P:cytokinin-activated signaling pathway"/>
    <property type="evidence" value="ECO:0007669"/>
    <property type="project" value="UniProtKB-KW"/>
</dbReference>
<dbReference type="CDD" id="cd16922">
    <property type="entry name" value="HATPase_EvgS-ArcB-TorS-like"/>
    <property type="match status" value="1"/>
</dbReference>
<dbReference type="CDD" id="cd00082">
    <property type="entry name" value="HisKA"/>
    <property type="match status" value="1"/>
</dbReference>
<dbReference type="CDD" id="cd17546">
    <property type="entry name" value="REC_hyHK_CKI1_RcsC-like"/>
    <property type="match status" value="1"/>
</dbReference>
<dbReference type="FunFam" id="3.40.50.2300:FF:000137">
    <property type="entry name" value="Histidine kinase 3"/>
    <property type="match status" value="1"/>
</dbReference>
<dbReference type="FunFam" id="1.10.287.130:FF:000015">
    <property type="entry name" value="Histidine kinase 4"/>
    <property type="match status" value="1"/>
</dbReference>
<dbReference type="FunFam" id="3.30.450.350:FF:000001">
    <property type="entry name" value="Histidine kinase 4"/>
    <property type="match status" value="1"/>
</dbReference>
<dbReference type="Gene3D" id="1.10.287.130">
    <property type="match status" value="1"/>
</dbReference>
<dbReference type="Gene3D" id="3.40.50.2300">
    <property type="match status" value="2"/>
</dbReference>
<dbReference type="Gene3D" id="6.10.250.1190">
    <property type="match status" value="1"/>
</dbReference>
<dbReference type="Gene3D" id="3.30.450.350">
    <property type="entry name" value="CHASE domain"/>
    <property type="match status" value="1"/>
</dbReference>
<dbReference type="Gene3D" id="3.30.565.10">
    <property type="entry name" value="Histidine kinase-like ATPase, C-terminal domain"/>
    <property type="match status" value="1"/>
</dbReference>
<dbReference type="InterPro" id="IPR050956">
    <property type="entry name" value="2C_system_His_kinase"/>
</dbReference>
<dbReference type="InterPro" id="IPR006189">
    <property type="entry name" value="CHASE_dom"/>
</dbReference>
<dbReference type="InterPro" id="IPR042240">
    <property type="entry name" value="CHASE_sf"/>
</dbReference>
<dbReference type="InterPro" id="IPR011006">
    <property type="entry name" value="CheY-like_superfamily"/>
</dbReference>
<dbReference type="InterPro" id="IPR036890">
    <property type="entry name" value="HATPase_C_sf"/>
</dbReference>
<dbReference type="InterPro" id="IPR005467">
    <property type="entry name" value="His_kinase_dom"/>
</dbReference>
<dbReference type="InterPro" id="IPR003661">
    <property type="entry name" value="HisK_dim/P_dom"/>
</dbReference>
<dbReference type="InterPro" id="IPR036097">
    <property type="entry name" value="HisK_dim/P_sf"/>
</dbReference>
<dbReference type="InterPro" id="IPR056839">
    <property type="entry name" value="Receiver_AHK4/CRE1_1st"/>
</dbReference>
<dbReference type="InterPro" id="IPR004358">
    <property type="entry name" value="Sig_transdc_His_kin-like_C"/>
</dbReference>
<dbReference type="InterPro" id="IPR001789">
    <property type="entry name" value="Sig_transdc_resp-reg_receiver"/>
</dbReference>
<dbReference type="PANTHER" id="PTHR43719:SF51">
    <property type="entry name" value="HISTIDINE KINASE 4"/>
    <property type="match status" value="1"/>
</dbReference>
<dbReference type="PANTHER" id="PTHR43719">
    <property type="entry name" value="TWO-COMPONENT HISTIDINE KINASE"/>
    <property type="match status" value="1"/>
</dbReference>
<dbReference type="Pfam" id="PF03924">
    <property type="entry name" value="CHASE"/>
    <property type="match status" value="1"/>
</dbReference>
<dbReference type="Pfam" id="PF02518">
    <property type="entry name" value="HATPase_c"/>
    <property type="match status" value="1"/>
</dbReference>
<dbReference type="Pfam" id="PF00512">
    <property type="entry name" value="HisKA"/>
    <property type="match status" value="1"/>
</dbReference>
<dbReference type="Pfam" id="PF24896">
    <property type="entry name" value="Receiver_CRE1"/>
    <property type="match status" value="1"/>
</dbReference>
<dbReference type="Pfam" id="PF00072">
    <property type="entry name" value="Response_reg"/>
    <property type="match status" value="1"/>
</dbReference>
<dbReference type="PRINTS" id="PR00344">
    <property type="entry name" value="BCTRLSENSOR"/>
</dbReference>
<dbReference type="SMART" id="SM01079">
    <property type="entry name" value="CHASE"/>
    <property type="match status" value="1"/>
</dbReference>
<dbReference type="SMART" id="SM00387">
    <property type="entry name" value="HATPase_c"/>
    <property type="match status" value="1"/>
</dbReference>
<dbReference type="SMART" id="SM00388">
    <property type="entry name" value="HisKA"/>
    <property type="match status" value="1"/>
</dbReference>
<dbReference type="SMART" id="SM00448">
    <property type="entry name" value="REC"/>
    <property type="match status" value="1"/>
</dbReference>
<dbReference type="SUPFAM" id="SSF55874">
    <property type="entry name" value="ATPase domain of HSP90 chaperone/DNA topoisomerase II/histidine kinase"/>
    <property type="match status" value="1"/>
</dbReference>
<dbReference type="SUPFAM" id="SSF52172">
    <property type="entry name" value="CheY-like"/>
    <property type="match status" value="2"/>
</dbReference>
<dbReference type="SUPFAM" id="SSF47384">
    <property type="entry name" value="Homodimeric domain of signal transducing histidine kinase"/>
    <property type="match status" value="1"/>
</dbReference>
<dbReference type="PROSITE" id="PS50839">
    <property type="entry name" value="CHASE"/>
    <property type="match status" value="1"/>
</dbReference>
<dbReference type="PROSITE" id="PS50109">
    <property type="entry name" value="HIS_KIN"/>
    <property type="match status" value="1"/>
</dbReference>
<dbReference type="PROSITE" id="PS50110">
    <property type="entry name" value="RESPONSE_REGULATORY"/>
    <property type="match status" value="2"/>
</dbReference>
<comment type="function">
    <text evidence="1">Cytokinins (CK) receptor related to bacterial two-component regulators (By similarity). Functions as a histidine kinase and transmits the stress signal to a downstream MAPK cascade (By similarity). This protein undergoes an ATP-dependent autophosphorylation at a conserved histidine residue in the kinase core, and a phosphoryl group is then transferred to a conserved aspartate residue in the receiver domain (By similarity).</text>
</comment>
<comment type="catalytic activity">
    <reaction evidence="1">
        <text>ATP + protein L-histidine = ADP + protein N-phospho-L-histidine.</text>
        <dbReference type="EC" id="2.7.13.3"/>
    </reaction>
</comment>
<comment type="activity regulation">
    <text evidence="1">Activated by cytokinins to initiate phosphorelay signaling.</text>
</comment>
<comment type="subunit">
    <text evidence="1">Homodimer.</text>
</comment>
<comment type="subcellular location">
    <subcellularLocation>
        <location evidence="1">Endoplasmic reticulum membrane</location>
        <topology evidence="2">Multi-pass membrane protein</topology>
    </subcellularLocation>
</comment>
<comment type="PTM">
    <text evidence="1">Autophosphorylated predominantly on His residues. Activation probably requires a transfer of a phosphate group between a His in the transmitter domain and an Asp of the receiver domain.</text>
</comment>
<organism>
    <name type="scientific">Medicago truncatula</name>
    <name type="common">Barrel medic</name>
    <name type="synonym">Medicago tribuloides</name>
    <dbReference type="NCBI Taxonomy" id="3880"/>
    <lineage>
        <taxon>Eukaryota</taxon>
        <taxon>Viridiplantae</taxon>
        <taxon>Streptophyta</taxon>
        <taxon>Embryophyta</taxon>
        <taxon>Tracheophyta</taxon>
        <taxon>Spermatophyta</taxon>
        <taxon>Magnoliopsida</taxon>
        <taxon>eudicotyledons</taxon>
        <taxon>Gunneridae</taxon>
        <taxon>Pentapetalae</taxon>
        <taxon>rosids</taxon>
        <taxon>fabids</taxon>
        <taxon>Fabales</taxon>
        <taxon>Fabaceae</taxon>
        <taxon>Papilionoideae</taxon>
        <taxon>50 kb inversion clade</taxon>
        <taxon>NPAAA clade</taxon>
        <taxon>Hologalegina</taxon>
        <taxon>IRL clade</taxon>
        <taxon>Trifolieae</taxon>
        <taxon>Medicago</taxon>
    </lineage>
</organism>
<keyword id="KW-0002">3D-structure</keyword>
<keyword id="KW-0106">Calcium</keyword>
<keyword id="KW-0256">Endoplasmic reticulum</keyword>
<keyword id="KW-0325">Glycoprotein</keyword>
<keyword id="KW-0378">Hydrolase</keyword>
<keyword id="KW-0418">Kinase</keyword>
<keyword id="KW-0460">Magnesium</keyword>
<keyword id="KW-0472">Membrane</keyword>
<keyword id="KW-0479">Metal-binding</keyword>
<keyword id="KW-0597">Phosphoprotein</keyword>
<keyword id="KW-0675">Receptor</keyword>
<keyword id="KW-1185">Reference proteome</keyword>
<keyword id="KW-0677">Repeat</keyword>
<keyword id="KW-0808">Transferase</keyword>
<keyword id="KW-0812">Transmembrane</keyword>
<keyword id="KW-1133">Transmembrane helix</keyword>
<name>CRE1_MEDTR</name>
<gene>
    <name evidence="8" type="primary">CRE1</name>
    <name evidence="9" type="ordered locus">MTR_8g106150</name>
    <name evidence="10" type="ORF">MtrunA17_Chr8g0392301</name>
</gene>
<accession>G7LCC3</accession>
<accession>A0A0C3Y896</accession>
<reference key="1">
    <citation type="journal article" date="2011" name="Nature">
        <title>The Medicago genome provides insight into the evolution of rhizobial symbioses.</title>
        <authorList>
            <person name="Young N.D."/>
            <person name="Debelle F."/>
            <person name="Oldroyd G.E.D."/>
            <person name="Geurts R."/>
            <person name="Cannon S.B."/>
            <person name="Udvardi M.K."/>
            <person name="Benedito V.A."/>
            <person name="Mayer K.F.X."/>
            <person name="Gouzy J."/>
            <person name="Schoof H."/>
            <person name="Van de Peer Y."/>
            <person name="Proost S."/>
            <person name="Cook D.R."/>
            <person name="Meyers B.C."/>
            <person name="Spannagl M."/>
            <person name="Cheung F."/>
            <person name="De Mita S."/>
            <person name="Krishnakumar V."/>
            <person name="Gundlach H."/>
            <person name="Zhou S."/>
            <person name="Mudge J."/>
            <person name="Bharti A.K."/>
            <person name="Murray J.D."/>
            <person name="Naoumkina M.A."/>
            <person name="Rosen B."/>
            <person name="Silverstein K.A.T."/>
            <person name="Tang H."/>
            <person name="Rombauts S."/>
            <person name="Zhao P.X."/>
            <person name="Zhou P."/>
            <person name="Barbe V."/>
            <person name="Bardou P."/>
            <person name="Bechner M."/>
            <person name="Bellec A."/>
            <person name="Berger A."/>
            <person name="Berges H."/>
            <person name="Bidwell S."/>
            <person name="Bisseling T."/>
            <person name="Choisne N."/>
            <person name="Couloux A."/>
            <person name="Denny R."/>
            <person name="Deshpande S."/>
            <person name="Dai X."/>
            <person name="Doyle J.J."/>
            <person name="Dudez A.-M."/>
            <person name="Farmer A.D."/>
            <person name="Fouteau S."/>
            <person name="Franken C."/>
            <person name="Gibelin C."/>
            <person name="Gish J."/>
            <person name="Goldstein S."/>
            <person name="Gonzalez A.J."/>
            <person name="Green P.J."/>
            <person name="Hallab A."/>
            <person name="Hartog M."/>
            <person name="Hua A."/>
            <person name="Humphray S.J."/>
            <person name="Jeong D.-H."/>
            <person name="Jing Y."/>
            <person name="Jocker A."/>
            <person name="Kenton S.M."/>
            <person name="Kim D.-J."/>
            <person name="Klee K."/>
            <person name="Lai H."/>
            <person name="Lang C."/>
            <person name="Lin S."/>
            <person name="Macmil S.L."/>
            <person name="Magdelenat G."/>
            <person name="Matthews L."/>
            <person name="McCorrison J."/>
            <person name="Monaghan E.L."/>
            <person name="Mun J.-H."/>
            <person name="Najar F.Z."/>
            <person name="Nicholson C."/>
            <person name="Noirot C."/>
            <person name="O'Bleness M."/>
            <person name="Paule C.R."/>
            <person name="Poulain J."/>
            <person name="Prion F."/>
            <person name="Qin B."/>
            <person name="Qu C."/>
            <person name="Retzel E.F."/>
            <person name="Riddle C."/>
            <person name="Sallet E."/>
            <person name="Samain S."/>
            <person name="Samson N."/>
            <person name="Sanders I."/>
            <person name="Saurat O."/>
            <person name="Scarpelli C."/>
            <person name="Schiex T."/>
            <person name="Segurens B."/>
            <person name="Severin A.J."/>
            <person name="Sherrier D.J."/>
            <person name="Shi R."/>
            <person name="Sims S."/>
            <person name="Singer S.R."/>
            <person name="Sinharoy S."/>
            <person name="Sterck L."/>
            <person name="Viollet A."/>
            <person name="Wang B.-B."/>
            <person name="Wang K."/>
            <person name="Wang M."/>
            <person name="Wang X."/>
            <person name="Warfsmann J."/>
            <person name="Weissenbach J."/>
            <person name="White D.D."/>
            <person name="White J.D."/>
            <person name="Wiley G.B."/>
            <person name="Wincker P."/>
            <person name="Xing Y."/>
            <person name="Yang L."/>
            <person name="Yao Z."/>
            <person name="Ying F."/>
            <person name="Zhai J."/>
            <person name="Zhou L."/>
            <person name="Zuber A."/>
            <person name="Denarie J."/>
            <person name="Dixon R.A."/>
            <person name="May G.D."/>
            <person name="Schwartz D.C."/>
            <person name="Rogers J."/>
            <person name="Quetier F."/>
            <person name="Town C.D."/>
            <person name="Roe B.A."/>
        </authorList>
    </citation>
    <scope>NUCLEOTIDE SEQUENCE [LARGE SCALE GENOMIC DNA]</scope>
    <source>
        <strain>cv. Jemalong A17</strain>
    </source>
</reference>
<reference key="2">
    <citation type="journal article" date="2014" name="BMC Genomics">
        <title>An improved genome release (version Mt4.0) for the model legume Medicago truncatula.</title>
        <authorList>
            <person name="Tang H."/>
            <person name="Krishnakumar V."/>
            <person name="Bidwell S."/>
            <person name="Rosen B."/>
            <person name="Chan A."/>
            <person name="Zhou S."/>
            <person name="Gentzbittel L."/>
            <person name="Childs K.L."/>
            <person name="Yandell M."/>
            <person name="Gundlach H."/>
            <person name="Mayer K.F."/>
            <person name="Schwartz D.C."/>
            <person name="Town C.D."/>
        </authorList>
    </citation>
    <scope>GENOME REANNOTATION</scope>
    <source>
        <strain>cv. Jemalong A17</strain>
    </source>
</reference>
<reference key="3">
    <citation type="journal article" date="2018" name="Nat. Plants">
        <title>Whole-genome landscape of Medicago truncatula symbiotic genes.</title>
        <authorList>
            <person name="Pecrix Y."/>
            <person name="Staton S.E."/>
            <person name="Sallet E."/>
            <person name="Lelandais-Briere C."/>
            <person name="Moreau S."/>
            <person name="Carrere S."/>
            <person name="Blein T."/>
            <person name="Jardinaud M.F."/>
            <person name="Latrasse D."/>
            <person name="Zouine M."/>
            <person name="Zahm M."/>
            <person name="Kreplak J."/>
            <person name="Mayjonade B."/>
            <person name="Satge C."/>
            <person name="Perez M."/>
            <person name="Cauet S."/>
            <person name="Marande W."/>
            <person name="Chantry-Darmon C."/>
            <person name="Lopez-Roques C."/>
            <person name="Bouchez O."/>
            <person name="Berard A."/>
            <person name="Debelle F."/>
            <person name="Munos S."/>
            <person name="Bendahmane A."/>
            <person name="Berges H."/>
            <person name="Niebel A."/>
            <person name="Buitink J."/>
            <person name="Frugier F."/>
            <person name="Benhamed M."/>
            <person name="Crespi M."/>
            <person name="Gouzy J."/>
            <person name="Gamas P."/>
        </authorList>
    </citation>
    <scope>NUCLEOTIDE SEQUENCE [LARGE SCALE GENOMIC DNA]</scope>
    <source>
        <strain>cv. Jemalong A17</strain>
        <tissue>Leaf</tissue>
    </source>
</reference>
<reference evidence="11" key="4">
    <citation type="journal article" date="2021" name="Front. Plant Sci.">
        <title>3D domain swapping dimerization of the receiver domain of cytokinin receptor CRE1 from Arabidopsis thaliana and Medicago truncatula.</title>
        <authorList>
            <person name="Tran L.H."/>
            <person name="Urbanowicz A."/>
            <person name="Jasinski M."/>
            <person name="Jaskolski M."/>
            <person name="Ruszkowski M."/>
        </authorList>
    </citation>
    <scope>X-RAY CRYSTALLOGRAPHY (2.50 ANGSTROMS) OF 351-994 IN COMPLEX WITH CA(2+)</scope>
</reference>
<protein>
    <recommendedName>
        <fullName evidence="8">Histidine kinase CRE1</fullName>
        <ecNumber evidence="1">2.7.13.3</ecNumber>
    </recommendedName>
    <alternativeName>
        <fullName evidence="8">Cytokinin receptor CYTOKININ RESPONSE 1</fullName>
        <shortName evidence="8">Cytokinin receptor CRE1</shortName>
        <shortName evidence="8">MtCRE1</shortName>
    </alternativeName>
</protein>